<evidence type="ECO:0000255" key="1">
    <source>
        <dbReference type="HAMAP-Rule" id="MF_00096"/>
    </source>
</evidence>
<evidence type="ECO:0000256" key="2">
    <source>
        <dbReference type="SAM" id="MobiDB-lite"/>
    </source>
</evidence>
<proteinExistence type="inferred from homology"/>
<organism>
    <name type="scientific">Lactiplantibacillus plantarum (strain ATCC BAA-793 / NCIMB 8826 / WCFS1)</name>
    <name type="common">Lactobacillus plantarum</name>
    <dbReference type="NCBI Taxonomy" id="220668"/>
    <lineage>
        <taxon>Bacteria</taxon>
        <taxon>Bacillati</taxon>
        <taxon>Bacillota</taxon>
        <taxon>Bacilli</taxon>
        <taxon>Lactobacillales</taxon>
        <taxon>Lactobacillaceae</taxon>
        <taxon>Lactiplantibacillus</taxon>
    </lineage>
</organism>
<keyword id="KW-0067">ATP-binding</keyword>
<keyword id="KW-0227">DNA damage</keyword>
<keyword id="KW-0234">DNA repair</keyword>
<keyword id="KW-0238">DNA-binding</keyword>
<keyword id="KW-0547">Nucleotide-binding</keyword>
<keyword id="KW-1185">Reference proteome</keyword>
<dbReference type="EMBL" id="AL935263">
    <property type="protein sequence ID" value="CCC79498.1"/>
    <property type="molecule type" value="Genomic_DNA"/>
</dbReference>
<dbReference type="RefSeq" id="WP_011101708.1">
    <property type="nucleotide sequence ID" value="NC_004567.2"/>
</dbReference>
<dbReference type="RefSeq" id="YP_004890012.1">
    <property type="nucleotide sequence ID" value="NC_004567.2"/>
</dbReference>
<dbReference type="SMR" id="Q88UZ7"/>
<dbReference type="STRING" id="220668.lp_2298"/>
<dbReference type="EnsemblBacteria" id="CCC79498">
    <property type="protein sequence ID" value="CCC79498"/>
    <property type="gene ID" value="lp_2298"/>
</dbReference>
<dbReference type="KEGG" id="lpl:lp_2298"/>
<dbReference type="PATRIC" id="fig|220668.9.peg.1942"/>
<dbReference type="eggNOG" id="COG0249">
    <property type="taxonomic scope" value="Bacteria"/>
</dbReference>
<dbReference type="HOGENOM" id="CLU_002472_4_0_9"/>
<dbReference type="OrthoDB" id="9802448at2"/>
<dbReference type="PhylomeDB" id="Q88UZ7"/>
<dbReference type="Proteomes" id="UP000000432">
    <property type="component" value="Chromosome"/>
</dbReference>
<dbReference type="GO" id="GO:0005829">
    <property type="term" value="C:cytosol"/>
    <property type="evidence" value="ECO:0007669"/>
    <property type="project" value="TreeGrafter"/>
</dbReference>
<dbReference type="GO" id="GO:0005524">
    <property type="term" value="F:ATP binding"/>
    <property type="evidence" value="ECO:0007669"/>
    <property type="project" value="UniProtKB-UniRule"/>
</dbReference>
<dbReference type="GO" id="GO:0140664">
    <property type="term" value="F:ATP-dependent DNA damage sensor activity"/>
    <property type="evidence" value="ECO:0007669"/>
    <property type="project" value="InterPro"/>
</dbReference>
<dbReference type="GO" id="GO:0003684">
    <property type="term" value="F:damaged DNA binding"/>
    <property type="evidence" value="ECO:0007669"/>
    <property type="project" value="UniProtKB-UniRule"/>
</dbReference>
<dbReference type="GO" id="GO:0030983">
    <property type="term" value="F:mismatched DNA binding"/>
    <property type="evidence" value="ECO:0007669"/>
    <property type="project" value="InterPro"/>
</dbReference>
<dbReference type="GO" id="GO:0006298">
    <property type="term" value="P:mismatch repair"/>
    <property type="evidence" value="ECO:0007669"/>
    <property type="project" value="UniProtKB-UniRule"/>
</dbReference>
<dbReference type="CDD" id="cd03284">
    <property type="entry name" value="ABC_MutS1"/>
    <property type="match status" value="1"/>
</dbReference>
<dbReference type="FunFam" id="1.10.1420.10:FF:000007">
    <property type="entry name" value="DNA mismatch repair protein MutS"/>
    <property type="match status" value="1"/>
</dbReference>
<dbReference type="FunFam" id="3.40.1170.10:FF:000001">
    <property type="entry name" value="DNA mismatch repair protein MutS"/>
    <property type="match status" value="1"/>
</dbReference>
<dbReference type="FunFam" id="3.40.50.300:FF:000896">
    <property type="entry name" value="DNA mismatch repair protein MutS"/>
    <property type="match status" value="1"/>
</dbReference>
<dbReference type="Gene3D" id="1.10.1420.10">
    <property type="match status" value="2"/>
</dbReference>
<dbReference type="Gene3D" id="3.40.1170.10">
    <property type="entry name" value="DNA repair protein MutS, domain I"/>
    <property type="match status" value="1"/>
</dbReference>
<dbReference type="Gene3D" id="3.30.420.110">
    <property type="entry name" value="MutS, connector domain"/>
    <property type="match status" value="1"/>
</dbReference>
<dbReference type="Gene3D" id="3.40.50.300">
    <property type="entry name" value="P-loop containing nucleotide triphosphate hydrolases"/>
    <property type="match status" value="1"/>
</dbReference>
<dbReference type="HAMAP" id="MF_00096">
    <property type="entry name" value="MutS"/>
    <property type="match status" value="1"/>
</dbReference>
<dbReference type="InterPro" id="IPR005748">
    <property type="entry name" value="DNA_mismatch_repair_MutS"/>
</dbReference>
<dbReference type="InterPro" id="IPR007695">
    <property type="entry name" value="DNA_mismatch_repair_MutS-lik_N"/>
</dbReference>
<dbReference type="InterPro" id="IPR017261">
    <property type="entry name" value="DNA_mismatch_repair_MutS/MSH"/>
</dbReference>
<dbReference type="InterPro" id="IPR000432">
    <property type="entry name" value="DNA_mismatch_repair_MutS_C"/>
</dbReference>
<dbReference type="InterPro" id="IPR007861">
    <property type="entry name" value="DNA_mismatch_repair_MutS_clamp"/>
</dbReference>
<dbReference type="InterPro" id="IPR007696">
    <property type="entry name" value="DNA_mismatch_repair_MutS_core"/>
</dbReference>
<dbReference type="InterPro" id="IPR016151">
    <property type="entry name" value="DNA_mismatch_repair_MutS_N"/>
</dbReference>
<dbReference type="InterPro" id="IPR036187">
    <property type="entry name" value="DNA_mismatch_repair_MutS_sf"/>
</dbReference>
<dbReference type="InterPro" id="IPR007860">
    <property type="entry name" value="DNA_mmatch_repair_MutS_con_dom"/>
</dbReference>
<dbReference type="InterPro" id="IPR045076">
    <property type="entry name" value="MutS"/>
</dbReference>
<dbReference type="InterPro" id="IPR036678">
    <property type="entry name" value="MutS_con_dom_sf"/>
</dbReference>
<dbReference type="InterPro" id="IPR027417">
    <property type="entry name" value="P-loop_NTPase"/>
</dbReference>
<dbReference type="NCBIfam" id="TIGR01070">
    <property type="entry name" value="mutS1"/>
    <property type="match status" value="1"/>
</dbReference>
<dbReference type="NCBIfam" id="NF003810">
    <property type="entry name" value="PRK05399.1"/>
    <property type="match status" value="1"/>
</dbReference>
<dbReference type="PANTHER" id="PTHR11361:SF34">
    <property type="entry name" value="DNA MISMATCH REPAIR PROTEIN MSH1, MITOCHONDRIAL"/>
    <property type="match status" value="1"/>
</dbReference>
<dbReference type="PANTHER" id="PTHR11361">
    <property type="entry name" value="DNA MISMATCH REPAIR PROTEIN MUTS FAMILY MEMBER"/>
    <property type="match status" value="1"/>
</dbReference>
<dbReference type="Pfam" id="PF01624">
    <property type="entry name" value="MutS_I"/>
    <property type="match status" value="1"/>
</dbReference>
<dbReference type="Pfam" id="PF05188">
    <property type="entry name" value="MutS_II"/>
    <property type="match status" value="1"/>
</dbReference>
<dbReference type="Pfam" id="PF05192">
    <property type="entry name" value="MutS_III"/>
    <property type="match status" value="1"/>
</dbReference>
<dbReference type="Pfam" id="PF05190">
    <property type="entry name" value="MutS_IV"/>
    <property type="match status" value="1"/>
</dbReference>
<dbReference type="Pfam" id="PF00488">
    <property type="entry name" value="MutS_V"/>
    <property type="match status" value="1"/>
</dbReference>
<dbReference type="PIRSF" id="PIRSF037677">
    <property type="entry name" value="DNA_mis_repair_Msh6"/>
    <property type="match status" value="1"/>
</dbReference>
<dbReference type="SMART" id="SM00534">
    <property type="entry name" value="MUTSac"/>
    <property type="match status" value="1"/>
</dbReference>
<dbReference type="SMART" id="SM00533">
    <property type="entry name" value="MUTSd"/>
    <property type="match status" value="1"/>
</dbReference>
<dbReference type="SUPFAM" id="SSF55271">
    <property type="entry name" value="DNA repair protein MutS, domain I"/>
    <property type="match status" value="1"/>
</dbReference>
<dbReference type="SUPFAM" id="SSF53150">
    <property type="entry name" value="DNA repair protein MutS, domain II"/>
    <property type="match status" value="1"/>
</dbReference>
<dbReference type="SUPFAM" id="SSF48334">
    <property type="entry name" value="DNA repair protein MutS, domain III"/>
    <property type="match status" value="1"/>
</dbReference>
<dbReference type="SUPFAM" id="SSF52540">
    <property type="entry name" value="P-loop containing nucleoside triphosphate hydrolases"/>
    <property type="match status" value="1"/>
</dbReference>
<dbReference type="PROSITE" id="PS00486">
    <property type="entry name" value="DNA_MISMATCH_REPAIR_2"/>
    <property type="match status" value="1"/>
</dbReference>
<feature type="chain" id="PRO_0000115105" description="DNA mismatch repair protein MutS">
    <location>
        <begin position="1"/>
        <end position="896"/>
    </location>
</feature>
<feature type="region of interest" description="Disordered" evidence="2">
    <location>
        <begin position="809"/>
        <end position="835"/>
    </location>
</feature>
<feature type="binding site" evidence="1">
    <location>
        <begin position="607"/>
        <end position="614"/>
    </location>
    <ligand>
        <name>ATP</name>
        <dbReference type="ChEBI" id="CHEBI:30616"/>
    </ligand>
</feature>
<comment type="function">
    <text evidence="1">This protein is involved in the repair of mismatches in DNA. It is possible that it carries out the mismatch recognition step. This protein has a weak ATPase activity.</text>
</comment>
<comment type="similarity">
    <text evidence="1">Belongs to the DNA mismatch repair MutS family.</text>
</comment>
<protein>
    <recommendedName>
        <fullName evidence="1">DNA mismatch repair protein MutS</fullName>
    </recommendedName>
</protein>
<accession>Q88UZ7</accession>
<accession>F9UQK9</accession>
<reference key="1">
    <citation type="journal article" date="2003" name="Proc. Natl. Acad. Sci. U.S.A.">
        <title>Complete genome sequence of Lactobacillus plantarum WCFS1.</title>
        <authorList>
            <person name="Kleerebezem M."/>
            <person name="Boekhorst J."/>
            <person name="van Kranenburg R."/>
            <person name="Molenaar D."/>
            <person name="Kuipers O.P."/>
            <person name="Leer R."/>
            <person name="Tarchini R."/>
            <person name="Peters S.A."/>
            <person name="Sandbrink H.M."/>
            <person name="Fiers M.W.E.J."/>
            <person name="Stiekema W."/>
            <person name="Klein Lankhorst R.M."/>
            <person name="Bron P.A."/>
            <person name="Hoffer S.M."/>
            <person name="Nierop Groot M.N."/>
            <person name="Kerkhoven R."/>
            <person name="De Vries M."/>
            <person name="Ursing B."/>
            <person name="De Vos W.M."/>
            <person name="Siezen R.J."/>
        </authorList>
    </citation>
    <scope>NUCLEOTIDE SEQUENCE [LARGE SCALE GENOMIC DNA]</scope>
    <source>
        <strain>ATCC BAA-793 / NCIMB 8826 / WCFS1</strain>
    </source>
</reference>
<reference key="2">
    <citation type="journal article" date="2012" name="J. Bacteriol.">
        <title>Complete resequencing and reannotation of the Lactobacillus plantarum WCFS1 genome.</title>
        <authorList>
            <person name="Siezen R.J."/>
            <person name="Francke C."/>
            <person name="Renckens B."/>
            <person name="Boekhorst J."/>
            <person name="Wels M."/>
            <person name="Kleerebezem M."/>
            <person name="van Hijum S.A."/>
        </authorList>
    </citation>
    <scope>NUCLEOTIDE SEQUENCE [LARGE SCALE GENOMIC DNA]</scope>
    <scope>GENOME REANNOTATION</scope>
    <source>
        <strain>ATCC BAA-793 / NCIMB 8826 / WCFS1</strain>
    </source>
</reference>
<sequence>MPQKTKDTPMMRQYFAVKNQYPDAFLFYRLGDFYEMFFDDAIKGAQLLELTLTTRNHSAENPIPMCGVPHRAVQNYIDILVDKGYKVAICEQMEDPKLAKGMVKREVIQLVTPGTTLERGAEQAKTNNYLTALIQRDQQYGFAYADLSTGELKTSVLTTNDTLINELTSLQTKEIVVDDSVASDLRDQIKTLGILISEQNNVTPQAQLSYLTQDLTVDLEQQVVERLLMYITVTQKRSLAHLQKAIAYEPSYFLKLDHNSKYNLELMKSIRTGKKQGTLLWLLDETKTAMGGRLLKQWIDRPLIVKADIETRQNKVATLLDHYFERSNLQEELTKVYDLERLAGRVAFGSVNGRDLVQLKTSLRQIPKIRYILSELDTQVFNDEVNQLDPVEDVADLIDAAIVEDAPLSVTDGGVIKDGYNEQLDQYRDAMNNGKKWIAELEAQERATTGIKNLKIGFNRVFGYYIEVTKANLAQLPKDRYERKQTLTNAERFSTPELKSHESLILEAESHSTDLEYQLFTKVRETVKKAIQRLQTLAKAVAAIDVLQSFAVVSEDYHFVRPKLTKSHDLKIVDGRHPVVEKVMGNQSYVPNNVTMSPDETVLLITGPNMSGKSTYMRQLALTVIMAQIGCFVPAKSAQLPIFDQIFTRIGATDDLISGQSTFMVEMQEANNALQHATANSLVLFDEIGRGTATYDGMALAQAIIEFVHNHIHAKTLFSTHYHELTALDQELSGLRNVHVGATEQDGELVFLHKVEPGAADKSYGVHVAKLAGMPTSLLERANKILTSLENQTSTVSTTAASIAASDAANSVAPNTAASMPVEAADESQPVESETPVAEAPVAEAGDEQLSLFAEPAVTDAKGEKVLQQLKTLNLMAMTPMDVMNQLYKWQQKLGK</sequence>
<gene>
    <name evidence="1" type="primary">mutS</name>
    <name type="synonym">hexA</name>
    <name type="ordered locus">lp_2298</name>
</gene>
<name>MUTS_LACPL</name>